<gene>
    <name evidence="1" type="primary">ybeD</name>
    <name type="ordered locus">Ecok1_05520</name>
    <name type="ORF">APECO1_1424</name>
</gene>
<dbReference type="EMBL" id="CP000468">
    <property type="protein sequence ID" value="ABJ00046.1"/>
    <property type="molecule type" value="Genomic_DNA"/>
</dbReference>
<dbReference type="RefSeq" id="WP_000850550.1">
    <property type="nucleotide sequence ID" value="NZ_CADILS010000006.1"/>
</dbReference>
<dbReference type="BMRB" id="A1A8Q6"/>
<dbReference type="SMR" id="A1A8Q6"/>
<dbReference type="GeneID" id="93776851"/>
<dbReference type="KEGG" id="ecv:APECO1_1424"/>
<dbReference type="HOGENOM" id="CLU_161438_2_1_6"/>
<dbReference type="Proteomes" id="UP000008216">
    <property type="component" value="Chromosome"/>
</dbReference>
<dbReference type="GO" id="GO:0005829">
    <property type="term" value="C:cytosol"/>
    <property type="evidence" value="ECO:0007669"/>
    <property type="project" value="TreeGrafter"/>
</dbReference>
<dbReference type="FunFam" id="3.30.70.260:FF:000002">
    <property type="entry name" value="UPF0250 protein YbeD"/>
    <property type="match status" value="1"/>
</dbReference>
<dbReference type="Gene3D" id="3.30.70.260">
    <property type="match status" value="1"/>
</dbReference>
<dbReference type="HAMAP" id="MF_00659">
    <property type="entry name" value="UPF0250"/>
    <property type="match status" value="1"/>
</dbReference>
<dbReference type="InterPro" id="IPR007454">
    <property type="entry name" value="UPF0250_YbeD-like"/>
</dbReference>
<dbReference type="InterPro" id="IPR027471">
    <property type="entry name" value="YbeD-like_sf"/>
</dbReference>
<dbReference type="NCBIfam" id="NF003447">
    <property type="entry name" value="PRK04998.1"/>
    <property type="match status" value="1"/>
</dbReference>
<dbReference type="PANTHER" id="PTHR38036">
    <property type="entry name" value="UPF0250 PROTEIN YBED"/>
    <property type="match status" value="1"/>
</dbReference>
<dbReference type="PANTHER" id="PTHR38036:SF1">
    <property type="entry name" value="UPF0250 PROTEIN YBED"/>
    <property type="match status" value="1"/>
</dbReference>
<dbReference type="Pfam" id="PF04359">
    <property type="entry name" value="DUF493"/>
    <property type="match status" value="1"/>
</dbReference>
<dbReference type="SUPFAM" id="SSF117991">
    <property type="entry name" value="YbeD/HP0495-like"/>
    <property type="match status" value="1"/>
</dbReference>
<protein>
    <recommendedName>
        <fullName evidence="1">UPF0250 protein YbeD</fullName>
    </recommendedName>
</protein>
<evidence type="ECO:0000255" key="1">
    <source>
        <dbReference type="HAMAP-Rule" id="MF_00659"/>
    </source>
</evidence>
<accession>A1A8Q6</accession>
<organism>
    <name type="scientific">Escherichia coli O1:K1 / APEC</name>
    <dbReference type="NCBI Taxonomy" id="405955"/>
    <lineage>
        <taxon>Bacteria</taxon>
        <taxon>Pseudomonadati</taxon>
        <taxon>Pseudomonadota</taxon>
        <taxon>Gammaproteobacteria</taxon>
        <taxon>Enterobacterales</taxon>
        <taxon>Enterobacteriaceae</taxon>
        <taxon>Escherichia</taxon>
    </lineage>
</organism>
<name>YBED_ECOK1</name>
<reference key="1">
    <citation type="journal article" date="2007" name="J. Bacteriol.">
        <title>The genome sequence of avian pathogenic Escherichia coli strain O1:K1:H7 shares strong similarities with human extraintestinal pathogenic E. coli genomes.</title>
        <authorList>
            <person name="Johnson T.J."/>
            <person name="Kariyawasam S."/>
            <person name="Wannemuehler Y."/>
            <person name="Mangiamele P."/>
            <person name="Johnson S.J."/>
            <person name="Doetkott C."/>
            <person name="Skyberg J.A."/>
            <person name="Lynne A.M."/>
            <person name="Johnson J.R."/>
            <person name="Nolan L.K."/>
        </authorList>
    </citation>
    <scope>NUCLEOTIDE SEQUENCE [LARGE SCALE GENOMIC DNA]</scope>
</reference>
<proteinExistence type="inferred from homology"/>
<feature type="chain" id="PRO_1000061863" description="UPF0250 protein YbeD">
    <location>
        <begin position="1"/>
        <end position="87"/>
    </location>
</feature>
<comment type="similarity">
    <text evidence="1">Belongs to the UPF0250 family.</text>
</comment>
<sequence>MKTKLNELLEFPTPFTYKVMGQALPELVDQVVEVVQRHAPGDYTPTVKPSSKGNYHSVSITINATHIEQVETLYEELGKIDIVRMVL</sequence>
<keyword id="KW-1185">Reference proteome</keyword>